<feature type="chain" id="PRO_0000276340" description="Large ribosomal subunit protein uL14c">
    <location>
        <begin position="1"/>
        <end position="122"/>
    </location>
</feature>
<organism>
    <name type="scientific">Coffea arabica</name>
    <name type="common">Arabian coffee</name>
    <dbReference type="NCBI Taxonomy" id="13443"/>
    <lineage>
        <taxon>Eukaryota</taxon>
        <taxon>Viridiplantae</taxon>
        <taxon>Streptophyta</taxon>
        <taxon>Embryophyta</taxon>
        <taxon>Tracheophyta</taxon>
        <taxon>Spermatophyta</taxon>
        <taxon>Magnoliopsida</taxon>
        <taxon>eudicotyledons</taxon>
        <taxon>Gunneridae</taxon>
        <taxon>Pentapetalae</taxon>
        <taxon>asterids</taxon>
        <taxon>lamiids</taxon>
        <taxon>Gentianales</taxon>
        <taxon>Rubiaceae</taxon>
        <taxon>Ixoroideae</taxon>
        <taxon>Gardenieae complex</taxon>
        <taxon>Bertiereae - Coffeeae clade</taxon>
        <taxon>Coffeeae</taxon>
        <taxon>Coffea</taxon>
    </lineage>
</organism>
<comment type="function">
    <text evidence="1">Binds to 23S rRNA.</text>
</comment>
<comment type="subunit">
    <text evidence="1">Part of the 50S ribosomal subunit.</text>
</comment>
<comment type="subcellular location">
    <subcellularLocation>
        <location>Plastid</location>
        <location>Chloroplast</location>
    </subcellularLocation>
</comment>
<comment type="similarity">
    <text evidence="1">Belongs to the universal ribosomal protein uL14 family.</text>
</comment>
<dbReference type="EMBL" id="EF044213">
    <property type="protein sequence ID" value="ABJ89715.1"/>
    <property type="molecule type" value="Genomic_DNA"/>
</dbReference>
<dbReference type="RefSeq" id="YP_817519.1">
    <property type="nucleotide sequence ID" value="NC_008535.1"/>
</dbReference>
<dbReference type="SMR" id="A0A372"/>
<dbReference type="GeneID" id="4421816"/>
<dbReference type="OrthoDB" id="274765at2759"/>
<dbReference type="Proteomes" id="UP000515148">
    <property type="component" value="Chloroplast Pltd"/>
</dbReference>
<dbReference type="GO" id="GO:0009507">
    <property type="term" value="C:chloroplast"/>
    <property type="evidence" value="ECO:0007669"/>
    <property type="project" value="UniProtKB-SubCell"/>
</dbReference>
<dbReference type="GO" id="GO:0022625">
    <property type="term" value="C:cytosolic large ribosomal subunit"/>
    <property type="evidence" value="ECO:0007669"/>
    <property type="project" value="TreeGrafter"/>
</dbReference>
<dbReference type="GO" id="GO:0070180">
    <property type="term" value="F:large ribosomal subunit rRNA binding"/>
    <property type="evidence" value="ECO:0007669"/>
    <property type="project" value="TreeGrafter"/>
</dbReference>
<dbReference type="GO" id="GO:0003735">
    <property type="term" value="F:structural constituent of ribosome"/>
    <property type="evidence" value="ECO:0007669"/>
    <property type="project" value="InterPro"/>
</dbReference>
<dbReference type="GO" id="GO:0006412">
    <property type="term" value="P:translation"/>
    <property type="evidence" value="ECO:0007669"/>
    <property type="project" value="UniProtKB-UniRule"/>
</dbReference>
<dbReference type="CDD" id="cd00337">
    <property type="entry name" value="Ribosomal_uL14"/>
    <property type="match status" value="1"/>
</dbReference>
<dbReference type="FunFam" id="2.40.150.20:FF:000002">
    <property type="entry name" value="50S ribosomal protein L14, chloroplastic"/>
    <property type="match status" value="1"/>
</dbReference>
<dbReference type="Gene3D" id="2.40.150.20">
    <property type="entry name" value="Ribosomal protein L14"/>
    <property type="match status" value="1"/>
</dbReference>
<dbReference type="HAMAP" id="MF_01367">
    <property type="entry name" value="Ribosomal_uL14"/>
    <property type="match status" value="1"/>
</dbReference>
<dbReference type="InterPro" id="IPR000218">
    <property type="entry name" value="Ribosomal_uL14"/>
</dbReference>
<dbReference type="InterPro" id="IPR005745">
    <property type="entry name" value="Ribosomal_uL14_bac-type"/>
</dbReference>
<dbReference type="InterPro" id="IPR019972">
    <property type="entry name" value="Ribosomal_uL14_CS"/>
</dbReference>
<dbReference type="InterPro" id="IPR036853">
    <property type="entry name" value="Ribosomal_uL14_sf"/>
</dbReference>
<dbReference type="NCBIfam" id="TIGR01067">
    <property type="entry name" value="rplN_bact"/>
    <property type="match status" value="1"/>
</dbReference>
<dbReference type="PANTHER" id="PTHR11761">
    <property type="entry name" value="50S/60S RIBOSOMAL PROTEIN L14/L23"/>
    <property type="match status" value="1"/>
</dbReference>
<dbReference type="PANTHER" id="PTHR11761:SF3">
    <property type="entry name" value="LARGE RIBOSOMAL SUBUNIT PROTEIN UL14M"/>
    <property type="match status" value="1"/>
</dbReference>
<dbReference type="Pfam" id="PF00238">
    <property type="entry name" value="Ribosomal_L14"/>
    <property type="match status" value="1"/>
</dbReference>
<dbReference type="SMART" id="SM01374">
    <property type="entry name" value="Ribosomal_L14"/>
    <property type="match status" value="1"/>
</dbReference>
<dbReference type="SUPFAM" id="SSF50193">
    <property type="entry name" value="Ribosomal protein L14"/>
    <property type="match status" value="1"/>
</dbReference>
<dbReference type="PROSITE" id="PS00049">
    <property type="entry name" value="RIBOSOMAL_L14"/>
    <property type="match status" value="1"/>
</dbReference>
<proteinExistence type="inferred from homology"/>
<accession>A0A372</accession>
<protein>
    <recommendedName>
        <fullName evidence="1">Large ribosomal subunit protein uL14c</fullName>
    </recommendedName>
    <alternativeName>
        <fullName evidence="2">50S ribosomal protein L14, chloroplastic</fullName>
    </alternativeName>
</protein>
<evidence type="ECO:0000255" key="1">
    <source>
        <dbReference type="HAMAP-Rule" id="MF_01367"/>
    </source>
</evidence>
<evidence type="ECO:0000305" key="2"/>
<sequence length="122" mass="13577">MIQPQTHLNVADNSGARELMCIRIIGASNRRYAHIGDVIVAVIKEAVPNMPLERSEVVRAVIVRTCKELKRDNGMIIRYDDNAAVVIDQEGNPKGTRIFGAIARELRQLNFTKIVSLAPEVL</sequence>
<geneLocation type="chloroplast"/>
<reference key="1">
    <citation type="journal article" date="2007" name="Plant Biotechnol. J.">
        <title>The complete nucleotide sequence of the coffee (Coffea arabica L.) chloroplast genome: organization and implications for biotechnology and phylogenetic relationships amongst angiosperms.</title>
        <authorList>
            <person name="Samson N."/>
            <person name="Bausher M.G."/>
            <person name="Lee S.-B."/>
            <person name="Jansen R.K."/>
            <person name="Daniell H."/>
        </authorList>
    </citation>
    <scope>NUCLEOTIDE SEQUENCE [LARGE SCALE GENOMIC DNA]</scope>
</reference>
<gene>
    <name evidence="1" type="primary">rpl14</name>
</gene>
<name>RK14_COFAR</name>
<keyword id="KW-0150">Chloroplast</keyword>
<keyword id="KW-0934">Plastid</keyword>
<keyword id="KW-1185">Reference proteome</keyword>
<keyword id="KW-0687">Ribonucleoprotein</keyword>
<keyword id="KW-0689">Ribosomal protein</keyword>
<keyword id="KW-0694">RNA-binding</keyword>
<keyword id="KW-0699">rRNA-binding</keyword>